<keyword id="KW-0687">Ribonucleoprotein</keyword>
<keyword id="KW-0689">Ribosomal protein</keyword>
<keyword id="KW-0694">RNA-binding</keyword>
<keyword id="KW-0699">rRNA-binding</keyword>
<accession>Q46WF4</accession>
<name>RL14_CUPPJ</name>
<dbReference type="EMBL" id="CP000090">
    <property type="protein sequence ID" value="AAZ62529.1"/>
    <property type="molecule type" value="Genomic_DNA"/>
</dbReference>
<dbReference type="SMR" id="Q46WF4"/>
<dbReference type="STRING" id="264198.Reut_A3169"/>
<dbReference type="KEGG" id="reu:Reut_A3169"/>
<dbReference type="eggNOG" id="COG0093">
    <property type="taxonomic scope" value="Bacteria"/>
</dbReference>
<dbReference type="HOGENOM" id="CLU_095071_2_1_4"/>
<dbReference type="OrthoDB" id="9806379at2"/>
<dbReference type="GO" id="GO:0022625">
    <property type="term" value="C:cytosolic large ribosomal subunit"/>
    <property type="evidence" value="ECO:0007669"/>
    <property type="project" value="TreeGrafter"/>
</dbReference>
<dbReference type="GO" id="GO:0070180">
    <property type="term" value="F:large ribosomal subunit rRNA binding"/>
    <property type="evidence" value="ECO:0007669"/>
    <property type="project" value="TreeGrafter"/>
</dbReference>
<dbReference type="GO" id="GO:0003735">
    <property type="term" value="F:structural constituent of ribosome"/>
    <property type="evidence" value="ECO:0007669"/>
    <property type="project" value="InterPro"/>
</dbReference>
<dbReference type="GO" id="GO:0006412">
    <property type="term" value="P:translation"/>
    <property type="evidence" value="ECO:0007669"/>
    <property type="project" value="UniProtKB-UniRule"/>
</dbReference>
<dbReference type="CDD" id="cd00337">
    <property type="entry name" value="Ribosomal_uL14"/>
    <property type="match status" value="1"/>
</dbReference>
<dbReference type="FunFam" id="2.40.150.20:FF:000001">
    <property type="entry name" value="50S ribosomal protein L14"/>
    <property type="match status" value="1"/>
</dbReference>
<dbReference type="Gene3D" id="2.40.150.20">
    <property type="entry name" value="Ribosomal protein L14"/>
    <property type="match status" value="1"/>
</dbReference>
<dbReference type="HAMAP" id="MF_01367">
    <property type="entry name" value="Ribosomal_uL14"/>
    <property type="match status" value="1"/>
</dbReference>
<dbReference type="InterPro" id="IPR000218">
    <property type="entry name" value="Ribosomal_uL14"/>
</dbReference>
<dbReference type="InterPro" id="IPR005745">
    <property type="entry name" value="Ribosomal_uL14_bac-type"/>
</dbReference>
<dbReference type="InterPro" id="IPR019972">
    <property type="entry name" value="Ribosomal_uL14_CS"/>
</dbReference>
<dbReference type="InterPro" id="IPR036853">
    <property type="entry name" value="Ribosomal_uL14_sf"/>
</dbReference>
<dbReference type="NCBIfam" id="TIGR01067">
    <property type="entry name" value="rplN_bact"/>
    <property type="match status" value="1"/>
</dbReference>
<dbReference type="PANTHER" id="PTHR11761">
    <property type="entry name" value="50S/60S RIBOSOMAL PROTEIN L14/L23"/>
    <property type="match status" value="1"/>
</dbReference>
<dbReference type="PANTHER" id="PTHR11761:SF3">
    <property type="entry name" value="LARGE RIBOSOMAL SUBUNIT PROTEIN UL14M"/>
    <property type="match status" value="1"/>
</dbReference>
<dbReference type="Pfam" id="PF00238">
    <property type="entry name" value="Ribosomal_L14"/>
    <property type="match status" value="1"/>
</dbReference>
<dbReference type="SMART" id="SM01374">
    <property type="entry name" value="Ribosomal_L14"/>
    <property type="match status" value="1"/>
</dbReference>
<dbReference type="SUPFAM" id="SSF50193">
    <property type="entry name" value="Ribosomal protein L14"/>
    <property type="match status" value="1"/>
</dbReference>
<dbReference type="PROSITE" id="PS00049">
    <property type="entry name" value="RIBOSOMAL_L14"/>
    <property type="match status" value="1"/>
</dbReference>
<comment type="function">
    <text evidence="1">Binds to 23S rRNA. Forms part of two intersubunit bridges in the 70S ribosome.</text>
</comment>
<comment type="subunit">
    <text evidence="1">Part of the 50S ribosomal subunit. Forms a cluster with proteins L3 and L19. In the 70S ribosome, L14 and L19 interact and together make contacts with the 16S rRNA in bridges B5 and B8.</text>
</comment>
<comment type="similarity">
    <text evidence="1">Belongs to the universal ribosomal protein uL14 family.</text>
</comment>
<gene>
    <name evidence="1" type="primary">rplN</name>
    <name type="ordered locus">Reut_A3169</name>
</gene>
<sequence>MIQTESRLEVADNTGAREVLCIKVLGGSKRRYASVGDIIKVTVKDAAPRGRVKKGDIYNAVVVRTAKGVRRADGSLVKFDGNAAVLLNNKLEPIGTRIFGPVTRELRTERFMKIVSLAPEVL</sequence>
<evidence type="ECO:0000255" key="1">
    <source>
        <dbReference type="HAMAP-Rule" id="MF_01367"/>
    </source>
</evidence>
<evidence type="ECO:0000305" key="2"/>
<organism>
    <name type="scientific">Cupriavidus pinatubonensis (strain JMP 134 / LMG 1197)</name>
    <name type="common">Cupriavidus necator (strain JMP 134)</name>
    <dbReference type="NCBI Taxonomy" id="264198"/>
    <lineage>
        <taxon>Bacteria</taxon>
        <taxon>Pseudomonadati</taxon>
        <taxon>Pseudomonadota</taxon>
        <taxon>Betaproteobacteria</taxon>
        <taxon>Burkholderiales</taxon>
        <taxon>Burkholderiaceae</taxon>
        <taxon>Cupriavidus</taxon>
    </lineage>
</organism>
<feature type="chain" id="PRO_0000266534" description="Large ribosomal subunit protein uL14">
    <location>
        <begin position="1"/>
        <end position="122"/>
    </location>
</feature>
<reference key="1">
    <citation type="journal article" date="2010" name="PLoS ONE">
        <title>The complete multipartite genome sequence of Cupriavidus necator JMP134, a versatile pollutant degrader.</title>
        <authorList>
            <person name="Lykidis A."/>
            <person name="Perez-Pantoja D."/>
            <person name="Ledger T."/>
            <person name="Mavromatis K."/>
            <person name="Anderson I.J."/>
            <person name="Ivanova N.N."/>
            <person name="Hooper S.D."/>
            <person name="Lapidus A."/>
            <person name="Lucas S."/>
            <person name="Gonzalez B."/>
            <person name="Kyrpides N.C."/>
        </authorList>
    </citation>
    <scope>NUCLEOTIDE SEQUENCE [LARGE SCALE GENOMIC DNA]</scope>
    <source>
        <strain>JMP134 / LMG 1197</strain>
    </source>
</reference>
<protein>
    <recommendedName>
        <fullName evidence="1">Large ribosomal subunit protein uL14</fullName>
    </recommendedName>
    <alternativeName>
        <fullName evidence="2">50S ribosomal protein L14</fullName>
    </alternativeName>
</protein>
<proteinExistence type="inferred from homology"/>